<feature type="chain" id="PRO_0000345944" description="tRNA modification GTPase MnmE">
    <location>
        <begin position="1"/>
        <end position="434"/>
    </location>
</feature>
<feature type="domain" description="TrmE-type G">
    <location>
        <begin position="219"/>
        <end position="361"/>
    </location>
</feature>
<feature type="binding site" evidence="1">
    <location>
        <position position="20"/>
    </location>
    <ligand>
        <name>(6S)-5-formyl-5,6,7,8-tetrahydrofolate</name>
        <dbReference type="ChEBI" id="CHEBI:57457"/>
    </ligand>
</feature>
<feature type="binding site" evidence="1">
    <location>
        <position position="79"/>
    </location>
    <ligand>
        <name>(6S)-5-formyl-5,6,7,8-tetrahydrofolate</name>
        <dbReference type="ChEBI" id="CHEBI:57457"/>
    </ligand>
</feature>
<feature type="binding site" evidence="1">
    <location>
        <position position="119"/>
    </location>
    <ligand>
        <name>(6S)-5-formyl-5,6,7,8-tetrahydrofolate</name>
        <dbReference type="ChEBI" id="CHEBI:57457"/>
    </ligand>
</feature>
<feature type="binding site" evidence="1">
    <location>
        <begin position="229"/>
        <end position="234"/>
    </location>
    <ligand>
        <name>GTP</name>
        <dbReference type="ChEBI" id="CHEBI:37565"/>
    </ligand>
</feature>
<feature type="binding site" evidence="1">
    <location>
        <position position="233"/>
    </location>
    <ligand>
        <name>Mg(2+)</name>
        <dbReference type="ChEBI" id="CHEBI:18420"/>
    </ligand>
</feature>
<feature type="binding site" evidence="1">
    <location>
        <begin position="248"/>
        <end position="254"/>
    </location>
    <ligand>
        <name>GTP</name>
        <dbReference type="ChEBI" id="CHEBI:37565"/>
    </ligand>
</feature>
<feature type="binding site" evidence="1">
    <location>
        <position position="254"/>
    </location>
    <ligand>
        <name>Mg(2+)</name>
        <dbReference type="ChEBI" id="CHEBI:18420"/>
    </ligand>
</feature>
<feature type="binding site" evidence="1">
    <location>
        <begin position="273"/>
        <end position="276"/>
    </location>
    <ligand>
        <name>GTP</name>
        <dbReference type="ChEBI" id="CHEBI:37565"/>
    </ligand>
</feature>
<feature type="binding site" evidence="1">
    <location>
        <position position="434"/>
    </location>
    <ligand>
        <name>(6S)-5-formyl-5,6,7,8-tetrahydrofolate</name>
        <dbReference type="ChEBI" id="CHEBI:57457"/>
    </ligand>
</feature>
<organism>
    <name type="scientific">Zymomonas mobilis subsp. mobilis (strain ATCC 31821 / ZM4 / CP4)</name>
    <dbReference type="NCBI Taxonomy" id="264203"/>
    <lineage>
        <taxon>Bacteria</taxon>
        <taxon>Pseudomonadati</taxon>
        <taxon>Pseudomonadota</taxon>
        <taxon>Alphaproteobacteria</taxon>
        <taxon>Sphingomonadales</taxon>
        <taxon>Zymomonadaceae</taxon>
        <taxon>Zymomonas</taxon>
    </lineage>
</organism>
<keyword id="KW-0963">Cytoplasm</keyword>
<keyword id="KW-0342">GTP-binding</keyword>
<keyword id="KW-0378">Hydrolase</keyword>
<keyword id="KW-0460">Magnesium</keyword>
<keyword id="KW-0479">Metal-binding</keyword>
<keyword id="KW-0547">Nucleotide-binding</keyword>
<keyword id="KW-0630">Potassium</keyword>
<keyword id="KW-1185">Reference proteome</keyword>
<keyword id="KW-0819">tRNA processing</keyword>
<comment type="function">
    <text evidence="1">Exhibits a very high intrinsic GTPase hydrolysis rate. Involved in the addition of a carboxymethylaminomethyl (cmnm) group at the wobble position (U34) of certain tRNAs, forming tRNA-cmnm(5)s(2)U34.</text>
</comment>
<comment type="cofactor">
    <cofactor evidence="1">
        <name>K(+)</name>
        <dbReference type="ChEBI" id="CHEBI:29103"/>
    </cofactor>
    <text evidence="1">Binds 1 potassium ion per subunit.</text>
</comment>
<comment type="subunit">
    <text evidence="1">Homodimer. Heterotetramer of two MnmE and two MnmG subunits.</text>
</comment>
<comment type="subcellular location">
    <subcellularLocation>
        <location evidence="1">Cytoplasm</location>
    </subcellularLocation>
</comment>
<comment type="similarity">
    <text evidence="1">Belongs to the TRAFAC class TrmE-Era-EngA-EngB-Septin-like GTPase superfamily. TrmE GTPase family.</text>
</comment>
<proteinExistence type="inferred from homology"/>
<reference key="1">
    <citation type="journal article" date="2005" name="Nat. Biotechnol.">
        <title>The genome sequence of the ethanologenic bacterium Zymomonas mobilis ZM4.</title>
        <authorList>
            <person name="Seo J.-S."/>
            <person name="Chong H."/>
            <person name="Park H.S."/>
            <person name="Yoon K.-O."/>
            <person name="Jung C."/>
            <person name="Kim J.J."/>
            <person name="Hong J.H."/>
            <person name="Kim H."/>
            <person name="Kim J.-H."/>
            <person name="Kil J.-I."/>
            <person name="Park C.J."/>
            <person name="Oh H.-M."/>
            <person name="Lee J.-S."/>
            <person name="Jin S.-J."/>
            <person name="Um H.-W."/>
            <person name="Lee H.-J."/>
            <person name="Oh S.-J."/>
            <person name="Kim J.Y."/>
            <person name="Kang H.L."/>
            <person name="Lee S.Y."/>
            <person name="Lee K.J."/>
            <person name="Kang H.S."/>
        </authorList>
    </citation>
    <scope>NUCLEOTIDE SEQUENCE [LARGE SCALE GENOMIC DNA]</scope>
    <source>
        <strain>ATCC 31821 / ZM4 / CP4</strain>
    </source>
</reference>
<accession>Q5NKZ8</accession>
<name>MNME_ZYMMO</name>
<dbReference type="EC" id="3.6.-.-" evidence="1"/>
<dbReference type="EMBL" id="AE008692">
    <property type="protein sequence ID" value="AAV90612.1"/>
    <property type="molecule type" value="Genomic_DNA"/>
</dbReference>
<dbReference type="RefSeq" id="WP_011241707.1">
    <property type="nucleotide sequence ID" value="NZ_CP035711.1"/>
</dbReference>
<dbReference type="SMR" id="Q5NKZ8"/>
<dbReference type="STRING" id="264203.ZMO1988"/>
<dbReference type="KEGG" id="zmo:ZMO1988"/>
<dbReference type="eggNOG" id="COG0486">
    <property type="taxonomic scope" value="Bacteria"/>
</dbReference>
<dbReference type="HOGENOM" id="CLU_019624_3_1_5"/>
<dbReference type="Proteomes" id="UP000001173">
    <property type="component" value="Chromosome"/>
</dbReference>
<dbReference type="GO" id="GO:0005737">
    <property type="term" value="C:cytoplasm"/>
    <property type="evidence" value="ECO:0007669"/>
    <property type="project" value="UniProtKB-SubCell"/>
</dbReference>
<dbReference type="GO" id="GO:0005525">
    <property type="term" value="F:GTP binding"/>
    <property type="evidence" value="ECO:0007669"/>
    <property type="project" value="UniProtKB-UniRule"/>
</dbReference>
<dbReference type="GO" id="GO:0003924">
    <property type="term" value="F:GTPase activity"/>
    <property type="evidence" value="ECO:0007669"/>
    <property type="project" value="UniProtKB-UniRule"/>
</dbReference>
<dbReference type="GO" id="GO:0046872">
    <property type="term" value="F:metal ion binding"/>
    <property type="evidence" value="ECO:0007669"/>
    <property type="project" value="UniProtKB-KW"/>
</dbReference>
<dbReference type="GO" id="GO:0030488">
    <property type="term" value="P:tRNA methylation"/>
    <property type="evidence" value="ECO:0007669"/>
    <property type="project" value="TreeGrafter"/>
</dbReference>
<dbReference type="GO" id="GO:0002098">
    <property type="term" value="P:tRNA wobble uridine modification"/>
    <property type="evidence" value="ECO:0007669"/>
    <property type="project" value="TreeGrafter"/>
</dbReference>
<dbReference type="CDD" id="cd04164">
    <property type="entry name" value="trmE"/>
    <property type="match status" value="1"/>
</dbReference>
<dbReference type="CDD" id="cd14858">
    <property type="entry name" value="TrmE_N"/>
    <property type="match status" value="1"/>
</dbReference>
<dbReference type="FunFam" id="3.30.1360.120:FF:000007">
    <property type="entry name" value="tRNA modification GTPase GTPBP3, mitochondrial"/>
    <property type="match status" value="1"/>
</dbReference>
<dbReference type="Gene3D" id="3.40.50.300">
    <property type="entry name" value="P-loop containing nucleotide triphosphate hydrolases"/>
    <property type="match status" value="1"/>
</dbReference>
<dbReference type="Gene3D" id="3.30.1360.120">
    <property type="entry name" value="Probable tRNA modification gtpase trme, domain 1"/>
    <property type="match status" value="1"/>
</dbReference>
<dbReference type="Gene3D" id="1.20.120.430">
    <property type="entry name" value="tRNA modification GTPase MnmE domain 2"/>
    <property type="match status" value="1"/>
</dbReference>
<dbReference type="HAMAP" id="MF_00379">
    <property type="entry name" value="GTPase_MnmE"/>
    <property type="match status" value="1"/>
</dbReference>
<dbReference type="InterPro" id="IPR031168">
    <property type="entry name" value="G_TrmE"/>
</dbReference>
<dbReference type="InterPro" id="IPR006073">
    <property type="entry name" value="GTP-bd"/>
</dbReference>
<dbReference type="InterPro" id="IPR018948">
    <property type="entry name" value="GTP-bd_TrmE_N"/>
</dbReference>
<dbReference type="InterPro" id="IPR004520">
    <property type="entry name" value="GTPase_MnmE"/>
</dbReference>
<dbReference type="InterPro" id="IPR027368">
    <property type="entry name" value="MnmE_dom2"/>
</dbReference>
<dbReference type="InterPro" id="IPR025867">
    <property type="entry name" value="MnmE_helical"/>
</dbReference>
<dbReference type="InterPro" id="IPR027417">
    <property type="entry name" value="P-loop_NTPase"/>
</dbReference>
<dbReference type="InterPro" id="IPR005225">
    <property type="entry name" value="Small_GTP-bd"/>
</dbReference>
<dbReference type="InterPro" id="IPR027266">
    <property type="entry name" value="TrmE/GcvT_dom1"/>
</dbReference>
<dbReference type="NCBIfam" id="TIGR00450">
    <property type="entry name" value="mnmE_trmE_thdF"/>
    <property type="match status" value="1"/>
</dbReference>
<dbReference type="NCBIfam" id="NF003661">
    <property type="entry name" value="PRK05291.1-3"/>
    <property type="match status" value="1"/>
</dbReference>
<dbReference type="NCBIfam" id="TIGR00231">
    <property type="entry name" value="small_GTP"/>
    <property type="match status" value="1"/>
</dbReference>
<dbReference type="PANTHER" id="PTHR42714">
    <property type="entry name" value="TRNA MODIFICATION GTPASE GTPBP3"/>
    <property type="match status" value="1"/>
</dbReference>
<dbReference type="PANTHER" id="PTHR42714:SF2">
    <property type="entry name" value="TRNA MODIFICATION GTPASE GTPBP3, MITOCHONDRIAL"/>
    <property type="match status" value="1"/>
</dbReference>
<dbReference type="Pfam" id="PF01926">
    <property type="entry name" value="MMR_HSR1"/>
    <property type="match status" value="1"/>
</dbReference>
<dbReference type="Pfam" id="PF12631">
    <property type="entry name" value="MnmE_helical"/>
    <property type="match status" value="1"/>
</dbReference>
<dbReference type="Pfam" id="PF10396">
    <property type="entry name" value="TrmE_N"/>
    <property type="match status" value="1"/>
</dbReference>
<dbReference type="SUPFAM" id="SSF103025">
    <property type="entry name" value="Folate-binding domain"/>
    <property type="match status" value="1"/>
</dbReference>
<dbReference type="SUPFAM" id="SSF52540">
    <property type="entry name" value="P-loop containing nucleoside triphosphate hydrolases"/>
    <property type="match status" value="1"/>
</dbReference>
<dbReference type="SUPFAM" id="SSF116878">
    <property type="entry name" value="TrmE connector domain"/>
    <property type="match status" value="1"/>
</dbReference>
<dbReference type="PROSITE" id="PS51709">
    <property type="entry name" value="G_TRME"/>
    <property type="match status" value="1"/>
</dbReference>
<protein>
    <recommendedName>
        <fullName evidence="1">tRNA modification GTPase MnmE</fullName>
        <ecNumber evidence="1">3.6.-.-</ecNumber>
    </recommendedName>
</protein>
<gene>
    <name evidence="1" type="primary">mnmE</name>
    <name evidence="1" type="synonym">trmE</name>
    <name type="ordered locus">ZMO1988</name>
</gene>
<sequence length="434" mass="47461">MKTIFALSSGRPPAGIAVIRISGSAAADTACLLTRKKIPEARRAVLRNLYDPDSGEQLDQSLLLWLPAPKTVTGEDLLELHVHGGRAVIDAVLKTLEKLPDLRPAEAGEFTRRAFENGVISLHEAEGLGDLLTAETASQRRAALMMSGGALGRQISAWQDRLLALSGQIEASFDFAEDIEEDETESRQHLAVMKDKIAALIAEHRQFENRPTMERLRDGLRVVLAGRPNAGKSTLINALTGQDIAITAPIAGTTRDVIEVSFALKGIPMRFSDTAGLHESDDLIEKAGIERAQRAIEEADILLWLGQAEEAPKTDGEVLVLYPQIDLPERHPIPEKIDIAVSAVTGEGIDRLQEKLVEIGKKILPKEDEVTLNRRQRQLVKEAADSLALALDAEDMLIIAEAIRQACRCYDRLTGKAGVENMLDNLFSRFCIGK</sequence>
<evidence type="ECO:0000255" key="1">
    <source>
        <dbReference type="HAMAP-Rule" id="MF_00379"/>
    </source>
</evidence>